<sequence>MTNYQHELYFAHCHGHPKKPLEIYMFVDPLCPECWSLEPVIKKLKIRYGRFFTLRIIASASLTALNKKRKKHLLAEAWEKIASRSGMSCDGNVWFEQDQPLSSPYMAALAFKAAELQGRKAGMQFLRNMQESLFVSKKNITDENVLLEIAENTSLDLEEFKKDLHSQSAVKALQCDMKIAAEMDVSVNPTLTFFNTQHEDEGLKVPGSYSYDVYEEILFEMLGDEPKPSETPPLECFIEYFRFVASKEIALVYDLSLEEVEKEMKKLAFAKKVAKVEAKHGMFWKSLSTYSDEYQSCEK</sequence>
<name>SPXH_BACSU</name>
<proteinExistence type="evidence at protein level"/>
<evidence type="ECO:0000255" key="1">
    <source>
        <dbReference type="HAMAP-Rule" id="MF_02245"/>
    </source>
</evidence>
<evidence type="ECO:0000269" key="2">
    <source>
    </source>
</evidence>
<evidence type="ECO:0000269" key="3">
    <source>
    </source>
</evidence>
<evidence type="ECO:0000269" key="4">
    <source>
    </source>
</evidence>
<evidence type="ECO:0000269" key="5">
    <source>
    </source>
</evidence>
<evidence type="ECO:0000269" key="6">
    <source>
    </source>
</evidence>
<evidence type="ECO:0000269" key="7">
    <source>
    </source>
</evidence>
<evidence type="ECO:0000305" key="8"/>
<evidence type="ECO:0000312" key="9">
    <source>
        <dbReference type="EMBL" id="CAB13012.2"/>
    </source>
</evidence>
<protein>
    <recommendedName>
        <fullName evidence="1 8">ClpXP adapter protein SpxH</fullName>
    </recommendedName>
</protein>
<dbReference type="EMBL" id="AL009126">
    <property type="protein sequence ID" value="CAB13012.2"/>
    <property type="molecule type" value="Genomic_DNA"/>
</dbReference>
<dbReference type="PIR" id="H69843">
    <property type="entry name" value="H69843"/>
</dbReference>
<dbReference type="RefSeq" id="NP_389037.2">
    <property type="nucleotide sequence ID" value="NC_000964.3"/>
</dbReference>
<dbReference type="RefSeq" id="WP_003245184.1">
    <property type="nucleotide sequence ID" value="NZ_OZ025638.1"/>
</dbReference>
<dbReference type="SMR" id="O31606"/>
<dbReference type="FunCoup" id="O31606">
    <property type="interactions" value="4"/>
</dbReference>
<dbReference type="IntAct" id="O31606">
    <property type="interactions" value="10"/>
</dbReference>
<dbReference type="STRING" id="224308.BSU11550"/>
<dbReference type="PaxDb" id="224308-BSU11550"/>
<dbReference type="EnsemblBacteria" id="CAB13012">
    <property type="protein sequence ID" value="CAB13012"/>
    <property type="gene ID" value="BSU_11550"/>
</dbReference>
<dbReference type="GeneID" id="939365"/>
<dbReference type="KEGG" id="bsu:BSU11550"/>
<dbReference type="PATRIC" id="fig|224308.179.peg.1244"/>
<dbReference type="eggNOG" id="COG2761">
    <property type="taxonomic scope" value="Bacteria"/>
</dbReference>
<dbReference type="InParanoid" id="O31606"/>
<dbReference type="OrthoDB" id="9813770at2"/>
<dbReference type="PhylomeDB" id="O31606"/>
<dbReference type="BioCyc" id="BSUB:BSU11550-MONOMER"/>
<dbReference type="Proteomes" id="UP000001570">
    <property type="component" value="Chromosome"/>
</dbReference>
<dbReference type="GO" id="GO:0005737">
    <property type="term" value="C:cytoplasm"/>
    <property type="evidence" value="ECO:0007669"/>
    <property type="project" value="UniProtKB-SubCell"/>
</dbReference>
<dbReference type="GO" id="GO:0046872">
    <property type="term" value="F:metal ion binding"/>
    <property type="evidence" value="ECO:0007669"/>
    <property type="project" value="UniProtKB-KW"/>
</dbReference>
<dbReference type="CDD" id="cd03025">
    <property type="entry name" value="DsbA_FrnE_like"/>
    <property type="match status" value="1"/>
</dbReference>
<dbReference type="Gene3D" id="3.40.30.10">
    <property type="entry name" value="Glutaredoxin"/>
    <property type="match status" value="1"/>
</dbReference>
<dbReference type="Gene3D" id="1.10.472.60">
    <property type="entry name" value="putative protein disulfide isomerase domain"/>
    <property type="match status" value="1"/>
</dbReference>
<dbReference type="HAMAP" id="MF_02245">
    <property type="entry name" value="Adapter_SpxH"/>
    <property type="match status" value="1"/>
</dbReference>
<dbReference type="InterPro" id="IPR046404">
    <property type="entry name" value="Adapter_SpxH"/>
</dbReference>
<dbReference type="InterPro" id="IPR036249">
    <property type="entry name" value="Thioredoxin-like_sf"/>
</dbReference>
<dbReference type="PANTHER" id="PTHR13887:SF47">
    <property type="entry name" value="CLPXP ADAPTER PROTEIN SPXH"/>
    <property type="match status" value="1"/>
</dbReference>
<dbReference type="PANTHER" id="PTHR13887">
    <property type="entry name" value="GLUTATHIONE S-TRANSFERASE KAPPA"/>
    <property type="match status" value="1"/>
</dbReference>
<dbReference type="Pfam" id="PF13743">
    <property type="entry name" value="Thioredoxin_5"/>
    <property type="match status" value="1"/>
</dbReference>
<dbReference type="SUPFAM" id="SSF52833">
    <property type="entry name" value="Thioredoxin-like"/>
    <property type="match status" value="1"/>
</dbReference>
<accession>O31606</accession>
<feature type="chain" id="PRO_0000278682" description="ClpXP adapter protein SpxH">
    <location>
        <begin position="1"/>
        <end position="299"/>
    </location>
</feature>
<feature type="mutagenesis site" description="Eliminates Spx binding. Does not enhance Spx proteolysis." evidence="3">
    <location>
        <begin position="1"/>
        <end position="24"/>
    </location>
</feature>
<keyword id="KW-0963">Cytoplasm</keyword>
<keyword id="KW-0479">Metal-binding</keyword>
<keyword id="KW-1185">Reference proteome</keyword>
<keyword id="KW-0862">Zinc</keyword>
<organism>
    <name type="scientific">Bacillus subtilis (strain 168)</name>
    <dbReference type="NCBI Taxonomy" id="224308"/>
    <lineage>
        <taxon>Bacteria</taxon>
        <taxon>Bacillati</taxon>
        <taxon>Bacillota</taxon>
        <taxon>Bacilli</taxon>
        <taxon>Bacillales</taxon>
        <taxon>Bacillaceae</taxon>
        <taxon>Bacillus</taxon>
    </lineage>
</organism>
<comment type="function">
    <text evidence="2 3 5 7">Adapter protein required for efficient degradation of Spx by ClpXP under non-stress conditions (PubMed:17908206, PubMed:19074380, PubMed:24942655). Interaction with Spx stabilizes Spx and exposes the C-terminus of Spx for recognition and proteolysis by ClpXP (PubMed:24942655, PubMed:27191337). Is specific for Spx and does not enhance proteolysis by ClpCP protease (PubMed:19074380). Probably binds 2 zinc ions (PubMed:19074380).</text>
</comment>
<comment type="activity regulation">
    <text evidence="4 6">Irreversible aggregation upon several stress conditions prevents interaction with Spx and therefore leads to Spx stabilization (PubMed:25353645). Inhibited by interaction with SpxO/YuzO (PubMed:21378193).</text>
</comment>
<comment type="subunit">
    <text evidence="3 4 5 7">Interacts with Spx (PubMed:19074380, PubMed:24942655, PubMed:27191337). Interacts with SpxO/YuzO (PubMed:21378193).</text>
</comment>
<comment type="interaction">
    <interactant intactId="EBI-6406036">
        <id>O31606</id>
    </interactant>
    <interactant intactId="EBI-5248631">
        <id>O31602</id>
        <label>spx</label>
    </interactant>
    <organismsDiffer>false</organismsDiffer>
    <experiments>3</experiments>
</comment>
<comment type="interaction">
    <interactant intactId="EBI-6406036">
        <id>O31606</id>
    </interactant>
    <interactant intactId="EBI-6413973">
        <id>O32302</id>
        <label>spxO</label>
    </interactant>
    <organismsDiffer>false</organismsDiffer>
    <experiments>3</experiments>
</comment>
<comment type="subcellular location">
    <subcellularLocation>
        <location evidence="1 6">Cytoplasm</location>
    </subcellularLocation>
    <text evidence="6">Soluble under non-stress conditions and aggregates in response to stress conditions such as disulfide stress, heat and ethanol.</text>
</comment>
<comment type="induction">
    <text evidence="2">Expressed throughout cell growth. Negatively influences its own expression.</text>
</comment>
<comment type="domain">
    <text evidence="3">The histidine-rich N terminus is essential for interaction with Spx.</text>
</comment>
<comment type="disruption phenotype">
    <text evidence="2">Strains lacking this gene show poor growth, affected sporulation, complete loss of competence development and overproduce Spx under unperturbed growth. Mutants also overproduce TrxA and show reduced sensitivity to disulfide stress.</text>
</comment>
<comment type="similarity">
    <text evidence="1 8">Belongs to the SpxH family.</text>
</comment>
<gene>
    <name evidence="1 9" type="primary">spxH</name>
    <name type="synonym">yjbH</name>
    <name type="ordered locus">BSU11550</name>
</gene>
<reference key="1">
    <citation type="journal article" date="1997" name="Nature">
        <title>The complete genome sequence of the Gram-positive bacterium Bacillus subtilis.</title>
        <authorList>
            <person name="Kunst F."/>
            <person name="Ogasawara N."/>
            <person name="Moszer I."/>
            <person name="Albertini A.M."/>
            <person name="Alloni G."/>
            <person name="Azevedo V."/>
            <person name="Bertero M.G."/>
            <person name="Bessieres P."/>
            <person name="Bolotin A."/>
            <person name="Borchert S."/>
            <person name="Borriss R."/>
            <person name="Boursier L."/>
            <person name="Brans A."/>
            <person name="Braun M."/>
            <person name="Brignell S.C."/>
            <person name="Bron S."/>
            <person name="Brouillet S."/>
            <person name="Bruschi C.V."/>
            <person name="Caldwell B."/>
            <person name="Capuano V."/>
            <person name="Carter N.M."/>
            <person name="Choi S.-K."/>
            <person name="Codani J.-J."/>
            <person name="Connerton I.F."/>
            <person name="Cummings N.J."/>
            <person name="Daniel R.A."/>
            <person name="Denizot F."/>
            <person name="Devine K.M."/>
            <person name="Duesterhoeft A."/>
            <person name="Ehrlich S.D."/>
            <person name="Emmerson P.T."/>
            <person name="Entian K.-D."/>
            <person name="Errington J."/>
            <person name="Fabret C."/>
            <person name="Ferrari E."/>
            <person name="Foulger D."/>
            <person name="Fritz C."/>
            <person name="Fujita M."/>
            <person name="Fujita Y."/>
            <person name="Fuma S."/>
            <person name="Galizzi A."/>
            <person name="Galleron N."/>
            <person name="Ghim S.-Y."/>
            <person name="Glaser P."/>
            <person name="Goffeau A."/>
            <person name="Golightly E.J."/>
            <person name="Grandi G."/>
            <person name="Guiseppi G."/>
            <person name="Guy B.J."/>
            <person name="Haga K."/>
            <person name="Haiech J."/>
            <person name="Harwood C.R."/>
            <person name="Henaut A."/>
            <person name="Hilbert H."/>
            <person name="Holsappel S."/>
            <person name="Hosono S."/>
            <person name="Hullo M.-F."/>
            <person name="Itaya M."/>
            <person name="Jones L.-M."/>
            <person name="Joris B."/>
            <person name="Karamata D."/>
            <person name="Kasahara Y."/>
            <person name="Klaerr-Blanchard M."/>
            <person name="Klein C."/>
            <person name="Kobayashi Y."/>
            <person name="Koetter P."/>
            <person name="Koningstein G."/>
            <person name="Krogh S."/>
            <person name="Kumano M."/>
            <person name="Kurita K."/>
            <person name="Lapidus A."/>
            <person name="Lardinois S."/>
            <person name="Lauber J."/>
            <person name="Lazarevic V."/>
            <person name="Lee S.-M."/>
            <person name="Levine A."/>
            <person name="Liu H."/>
            <person name="Masuda S."/>
            <person name="Mauel C."/>
            <person name="Medigue C."/>
            <person name="Medina N."/>
            <person name="Mellado R.P."/>
            <person name="Mizuno M."/>
            <person name="Moestl D."/>
            <person name="Nakai S."/>
            <person name="Noback M."/>
            <person name="Noone D."/>
            <person name="O'Reilly M."/>
            <person name="Ogawa K."/>
            <person name="Ogiwara A."/>
            <person name="Oudega B."/>
            <person name="Park S.-H."/>
            <person name="Parro V."/>
            <person name="Pohl T.M."/>
            <person name="Portetelle D."/>
            <person name="Porwollik S."/>
            <person name="Prescott A.M."/>
            <person name="Presecan E."/>
            <person name="Pujic P."/>
            <person name="Purnelle B."/>
            <person name="Rapoport G."/>
            <person name="Rey M."/>
            <person name="Reynolds S."/>
            <person name="Rieger M."/>
            <person name="Rivolta C."/>
            <person name="Rocha E."/>
            <person name="Roche B."/>
            <person name="Rose M."/>
            <person name="Sadaie Y."/>
            <person name="Sato T."/>
            <person name="Scanlan E."/>
            <person name="Schleich S."/>
            <person name="Schroeter R."/>
            <person name="Scoffone F."/>
            <person name="Sekiguchi J."/>
            <person name="Sekowska A."/>
            <person name="Seror S.J."/>
            <person name="Serror P."/>
            <person name="Shin B.-S."/>
            <person name="Soldo B."/>
            <person name="Sorokin A."/>
            <person name="Tacconi E."/>
            <person name="Takagi T."/>
            <person name="Takahashi H."/>
            <person name="Takemaru K."/>
            <person name="Takeuchi M."/>
            <person name="Tamakoshi A."/>
            <person name="Tanaka T."/>
            <person name="Terpstra P."/>
            <person name="Tognoni A."/>
            <person name="Tosato V."/>
            <person name="Uchiyama S."/>
            <person name="Vandenbol M."/>
            <person name="Vannier F."/>
            <person name="Vassarotti A."/>
            <person name="Viari A."/>
            <person name="Wambutt R."/>
            <person name="Wedler E."/>
            <person name="Wedler H."/>
            <person name="Weitzenegger T."/>
            <person name="Winters P."/>
            <person name="Wipat A."/>
            <person name="Yamamoto H."/>
            <person name="Yamane K."/>
            <person name="Yasumoto K."/>
            <person name="Yata K."/>
            <person name="Yoshida K."/>
            <person name="Yoshikawa H.-F."/>
            <person name="Zumstein E."/>
            <person name="Yoshikawa H."/>
            <person name="Danchin A."/>
        </authorList>
    </citation>
    <scope>NUCLEOTIDE SEQUENCE [LARGE SCALE GENOMIC DNA]</scope>
    <source>
        <strain>168</strain>
    </source>
</reference>
<reference key="2">
    <citation type="journal article" date="2007" name="Mol. Microbiol.">
        <title>YjbH is a novel negative effector of the disulphide stress regulator, Spx, in Bacillus subtilis.</title>
        <authorList>
            <person name="Larsson J.T."/>
            <person name="Rogstam A."/>
            <person name="von Wachenfeldt C."/>
        </authorList>
    </citation>
    <scope>FUNCTION</scope>
    <scope>INDUCTION</scope>
    <scope>DISRUPTION PHENOTYPE</scope>
</reference>
<reference key="3">
    <citation type="journal article" date="2009" name="J. Bacteriol.">
        <title>The YjbH protein of Bacillus subtilis enhances ClpXP-catalyzed proteolysis of Spx.</title>
        <authorList>
            <person name="Garg S.K."/>
            <person name="Kommineni S."/>
            <person name="Henslee L."/>
            <person name="Zhang Y."/>
            <person name="Zuber P."/>
        </authorList>
    </citation>
    <scope>FUNCTION</scope>
    <scope>ZINC-BINDING</scope>
    <scope>INTERACTION WITH SPX</scope>
    <scope>DOMAIN</scope>
    <scope>MUTAGENESIS OF 1-MET--TYR-24</scope>
    <source>
        <strain>168 / JH642</strain>
    </source>
</reference>
<reference key="4">
    <citation type="journal article" date="2011" name="J. Bacteriol.">
        <title>YjbH-enhanced proteolysis of Spx by ClpXP in Bacillus subtilis is inhibited by the small protein YirB (YuzO).</title>
        <authorList>
            <person name="Kommineni S."/>
            <person name="Garg S.K."/>
            <person name="Chan C.M."/>
            <person name="Zuber P."/>
        </authorList>
    </citation>
    <scope>ACTIVITY REGULATION</scope>
    <scope>INTERACTION WITH SPXO/YUZO</scope>
    <source>
        <strain>168 / JH642</strain>
    </source>
</reference>
<reference key="5">
    <citation type="journal article" date="2014" name="Mol. Microbiol.">
        <title>Adaptor bypass mutations of Bacillus subtilis spx suggest a mechanism for YjbH-enhanced proteolysis of the regulator Spx by ClpXP.</title>
        <authorList>
            <person name="Chan C.M."/>
            <person name="Hahn E."/>
            <person name="Zuber P."/>
        </authorList>
    </citation>
    <scope>FUNCTION</scope>
    <scope>INTERACTION WITH SPX</scope>
</reference>
<reference key="6">
    <citation type="journal article" date="2015" name="Mol. Microbiol.">
        <title>Regulated protein aggregation: a mechanism to control the activity of the ClpXP adaptor protein YjbH.</title>
        <authorList>
            <person name="Engman J."/>
            <person name="von Wachenfeldt C."/>
        </authorList>
    </citation>
    <scope>ACTIVITY REGULATION</scope>
    <scope>SUBCELLULAR LOCATION</scope>
</reference>
<reference key="7">
    <citation type="journal article" date="2016" name="Proteins">
        <title>Exploring structure and interactions of the bacterial adaptor protein YjbH by crosslinking mass spectrometry.</title>
        <authorList>
            <person name="Al-Eryani Y."/>
            <person name="Ib Rasmussen M."/>
            <person name="Kjellstroem S."/>
            <person name="Hoejrup P."/>
            <person name="Emanuelsson C."/>
            <person name="von Wachenfeldt C."/>
        </authorList>
    </citation>
    <scope>FUNCTION</scope>
    <scope>INTERACTION WITH SPX</scope>
    <scope>3D-STRUCTURE MODELING</scope>
</reference>